<accession>B4TV07</accession>
<comment type="function">
    <text evidence="1">Catalyzes the oxidation of either pyridoxine 5'-phosphate (PNP) or pyridoxamine 5'-phosphate (PMP) into pyridoxal 5'-phosphate (PLP).</text>
</comment>
<comment type="catalytic activity">
    <reaction evidence="1">
        <text>pyridoxamine 5'-phosphate + O2 + H2O = pyridoxal 5'-phosphate + H2O2 + NH4(+)</text>
        <dbReference type="Rhea" id="RHEA:15817"/>
        <dbReference type="ChEBI" id="CHEBI:15377"/>
        <dbReference type="ChEBI" id="CHEBI:15379"/>
        <dbReference type="ChEBI" id="CHEBI:16240"/>
        <dbReference type="ChEBI" id="CHEBI:28938"/>
        <dbReference type="ChEBI" id="CHEBI:58451"/>
        <dbReference type="ChEBI" id="CHEBI:597326"/>
        <dbReference type="EC" id="1.4.3.5"/>
    </reaction>
</comment>
<comment type="catalytic activity">
    <reaction evidence="1">
        <text>pyridoxine 5'-phosphate + O2 = pyridoxal 5'-phosphate + H2O2</text>
        <dbReference type="Rhea" id="RHEA:15149"/>
        <dbReference type="ChEBI" id="CHEBI:15379"/>
        <dbReference type="ChEBI" id="CHEBI:16240"/>
        <dbReference type="ChEBI" id="CHEBI:58589"/>
        <dbReference type="ChEBI" id="CHEBI:597326"/>
        <dbReference type="EC" id="1.4.3.5"/>
    </reaction>
</comment>
<comment type="cofactor">
    <cofactor evidence="1">
        <name>FMN</name>
        <dbReference type="ChEBI" id="CHEBI:58210"/>
    </cofactor>
    <text evidence="1">Binds 1 FMN per subunit.</text>
</comment>
<comment type="pathway">
    <text evidence="1">Cofactor metabolism; pyridoxal 5'-phosphate salvage; pyridoxal 5'-phosphate from pyridoxamine 5'-phosphate: step 1/1.</text>
</comment>
<comment type="pathway">
    <text evidence="1">Cofactor metabolism; pyridoxal 5'-phosphate salvage; pyridoxal 5'-phosphate from pyridoxine 5'-phosphate: step 1/1.</text>
</comment>
<comment type="subunit">
    <text evidence="1">Homodimer.</text>
</comment>
<comment type="similarity">
    <text evidence="1">Belongs to the pyridoxamine 5'-phosphate oxidase family.</text>
</comment>
<feature type="chain" id="PRO_1000186340" description="Pyridoxine/pyridoxamine 5'-phosphate oxidase">
    <location>
        <begin position="1"/>
        <end position="218"/>
    </location>
</feature>
<feature type="binding site" evidence="1">
    <location>
        <begin position="14"/>
        <end position="17"/>
    </location>
    <ligand>
        <name>substrate</name>
    </ligand>
</feature>
<feature type="binding site" evidence="1">
    <location>
        <begin position="67"/>
        <end position="72"/>
    </location>
    <ligand>
        <name>FMN</name>
        <dbReference type="ChEBI" id="CHEBI:58210"/>
    </ligand>
</feature>
<feature type="binding site" evidence="1">
    <location>
        <position position="72"/>
    </location>
    <ligand>
        <name>substrate</name>
    </ligand>
</feature>
<feature type="binding site" evidence="1">
    <location>
        <begin position="82"/>
        <end position="83"/>
    </location>
    <ligand>
        <name>FMN</name>
        <dbReference type="ChEBI" id="CHEBI:58210"/>
    </ligand>
</feature>
<feature type="binding site" evidence="1">
    <location>
        <position position="88"/>
    </location>
    <ligand>
        <name>FMN</name>
        <dbReference type="ChEBI" id="CHEBI:58210"/>
    </ligand>
</feature>
<feature type="binding site" evidence="1">
    <location>
        <position position="89"/>
    </location>
    <ligand>
        <name>FMN</name>
        <dbReference type="ChEBI" id="CHEBI:58210"/>
    </ligand>
</feature>
<feature type="binding site" evidence="1">
    <location>
        <position position="111"/>
    </location>
    <ligand>
        <name>FMN</name>
        <dbReference type="ChEBI" id="CHEBI:58210"/>
    </ligand>
</feature>
<feature type="binding site" evidence="1">
    <location>
        <position position="129"/>
    </location>
    <ligand>
        <name>substrate</name>
    </ligand>
</feature>
<feature type="binding site" evidence="1">
    <location>
        <position position="133"/>
    </location>
    <ligand>
        <name>substrate</name>
    </ligand>
</feature>
<feature type="binding site" evidence="1">
    <location>
        <position position="137"/>
    </location>
    <ligand>
        <name>substrate</name>
    </ligand>
</feature>
<feature type="binding site" evidence="1">
    <location>
        <begin position="146"/>
        <end position="147"/>
    </location>
    <ligand>
        <name>FMN</name>
        <dbReference type="ChEBI" id="CHEBI:58210"/>
    </ligand>
</feature>
<feature type="binding site" evidence="1">
    <location>
        <position position="191"/>
    </location>
    <ligand>
        <name>FMN</name>
        <dbReference type="ChEBI" id="CHEBI:58210"/>
    </ligand>
</feature>
<feature type="binding site" evidence="1">
    <location>
        <begin position="197"/>
        <end position="199"/>
    </location>
    <ligand>
        <name>substrate</name>
    </ligand>
</feature>
<feature type="binding site" evidence="1">
    <location>
        <position position="201"/>
    </location>
    <ligand>
        <name>FMN</name>
        <dbReference type="ChEBI" id="CHEBI:58210"/>
    </ligand>
</feature>
<dbReference type="EC" id="1.4.3.5" evidence="1"/>
<dbReference type="EMBL" id="CP001127">
    <property type="protein sequence ID" value="ACF90335.1"/>
    <property type="molecule type" value="Genomic_DNA"/>
</dbReference>
<dbReference type="RefSeq" id="WP_001282334.1">
    <property type="nucleotide sequence ID" value="NC_011094.1"/>
</dbReference>
<dbReference type="SMR" id="B4TV07"/>
<dbReference type="KEGG" id="sew:SeSA_A1545"/>
<dbReference type="HOGENOM" id="CLU_032263_2_2_6"/>
<dbReference type="UniPathway" id="UPA01068">
    <property type="reaction ID" value="UER00304"/>
</dbReference>
<dbReference type="UniPathway" id="UPA01068">
    <property type="reaction ID" value="UER00305"/>
</dbReference>
<dbReference type="Proteomes" id="UP000001865">
    <property type="component" value="Chromosome"/>
</dbReference>
<dbReference type="GO" id="GO:0010181">
    <property type="term" value="F:FMN binding"/>
    <property type="evidence" value="ECO:0007669"/>
    <property type="project" value="UniProtKB-UniRule"/>
</dbReference>
<dbReference type="GO" id="GO:0004733">
    <property type="term" value="F:pyridoxamine phosphate oxidase activity"/>
    <property type="evidence" value="ECO:0007669"/>
    <property type="project" value="UniProtKB-UniRule"/>
</dbReference>
<dbReference type="GO" id="GO:0008615">
    <property type="term" value="P:pyridoxine biosynthetic process"/>
    <property type="evidence" value="ECO:0007669"/>
    <property type="project" value="UniProtKB-KW"/>
</dbReference>
<dbReference type="FunFam" id="2.30.110.10:FF:000001">
    <property type="entry name" value="Pyridoxine/pyridoxamine 5'-phosphate oxidase"/>
    <property type="match status" value="1"/>
</dbReference>
<dbReference type="Gene3D" id="2.30.110.10">
    <property type="entry name" value="Electron Transport, Fmn-binding Protein, Chain A"/>
    <property type="match status" value="1"/>
</dbReference>
<dbReference type="HAMAP" id="MF_01629">
    <property type="entry name" value="PdxH"/>
    <property type="match status" value="1"/>
</dbReference>
<dbReference type="InterPro" id="IPR000659">
    <property type="entry name" value="Pyridox_Oxase"/>
</dbReference>
<dbReference type="InterPro" id="IPR019740">
    <property type="entry name" value="Pyridox_Oxase_CS"/>
</dbReference>
<dbReference type="InterPro" id="IPR011576">
    <property type="entry name" value="Pyridox_Oxase_N"/>
</dbReference>
<dbReference type="InterPro" id="IPR019576">
    <property type="entry name" value="Pyridoxamine_oxidase_dimer_C"/>
</dbReference>
<dbReference type="InterPro" id="IPR012349">
    <property type="entry name" value="Split_barrel_FMN-bd"/>
</dbReference>
<dbReference type="NCBIfam" id="TIGR00558">
    <property type="entry name" value="pdxH"/>
    <property type="match status" value="1"/>
</dbReference>
<dbReference type="NCBIfam" id="NF004231">
    <property type="entry name" value="PRK05679.1"/>
    <property type="match status" value="1"/>
</dbReference>
<dbReference type="PANTHER" id="PTHR10851:SF0">
    <property type="entry name" value="PYRIDOXINE-5'-PHOSPHATE OXIDASE"/>
    <property type="match status" value="1"/>
</dbReference>
<dbReference type="PANTHER" id="PTHR10851">
    <property type="entry name" value="PYRIDOXINE-5-PHOSPHATE OXIDASE"/>
    <property type="match status" value="1"/>
</dbReference>
<dbReference type="Pfam" id="PF10590">
    <property type="entry name" value="PNP_phzG_C"/>
    <property type="match status" value="1"/>
</dbReference>
<dbReference type="Pfam" id="PF01243">
    <property type="entry name" value="PNPOx_N"/>
    <property type="match status" value="1"/>
</dbReference>
<dbReference type="PIRSF" id="PIRSF000190">
    <property type="entry name" value="Pyd_amn-ph_oxd"/>
    <property type="match status" value="1"/>
</dbReference>
<dbReference type="SUPFAM" id="SSF50475">
    <property type="entry name" value="FMN-binding split barrel"/>
    <property type="match status" value="1"/>
</dbReference>
<dbReference type="PROSITE" id="PS01064">
    <property type="entry name" value="PYRIDOX_OXIDASE"/>
    <property type="match status" value="1"/>
</dbReference>
<protein>
    <recommendedName>
        <fullName evidence="1">Pyridoxine/pyridoxamine 5'-phosphate oxidase</fullName>
        <ecNumber evidence="1">1.4.3.5</ecNumber>
    </recommendedName>
    <alternativeName>
        <fullName evidence="1">PNP/PMP oxidase</fullName>
        <shortName evidence="1">PNPOx</shortName>
    </alternativeName>
    <alternativeName>
        <fullName evidence="1">Pyridoxal 5'-phosphate synthase</fullName>
    </alternativeName>
</protein>
<name>PDXH_SALSV</name>
<evidence type="ECO:0000255" key="1">
    <source>
        <dbReference type="HAMAP-Rule" id="MF_01629"/>
    </source>
</evidence>
<organism>
    <name type="scientific">Salmonella schwarzengrund (strain CVM19633)</name>
    <dbReference type="NCBI Taxonomy" id="439843"/>
    <lineage>
        <taxon>Bacteria</taxon>
        <taxon>Pseudomonadati</taxon>
        <taxon>Pseudomonadota</taxon>
        <taxon>Gammaproteobacteria</taxon>
        <taxon>Enterobacterales</taxon>
        <taxon>Enterobacteriaceae</taxon>
        <taxon>Salmonella</taxon>
    </lineage>
</organism>
<gene>
    <name evidence="1" type="primary">pdxH</name>
    <name type="ordered locus">SeSA_A1545</name>
</gene>
<keyword id="KW-0285">Flavoprotein</keyword>
<keyword id="KW-0288">FMN</keyword>
<keyword id="KW-0560">Oxidoreductase</keyword>
<keyword id="KW-0664">Pyridoxine biosynthesis</keyword>
<sequence>MSDNDQLQQIAHLRREYTKGGLRRRDLPAEPLTLFERWLGQACDARLADPTAMVVATVDDKGQPYQRIVLLKHYDEKGLVFYTNLGSRKAHQIEHNPRISLLFPWHMLERQVMVTGKAERLSTLEVVRYFHSRPRDSQIGAWVSKQSSRISARGILESKFLELKQKFQQGEVPLPSFWGGFRVSIEQMEFWQGGEHRLHDRFLYQRDDGAWKIDRLAP</sequence>
<reference key="1">
    <citation type="journal article" date="2011" name="J. Bacteriol.">
        <title>Comparative genomics of 28 Salmonella enterica isolates: evidence for CRISPR-mediated adaptive sublineage evolution.</title>
        <authorList>
            <person name="Fricke W.F."/>
            <person name="Mammel M.K."/>
            <person name="McDermott P.F."/>
            <person name="Tartera C."/>
            <person name="White D.G."/>
            <person name="Leclerc J.E."/>
            <person name="Ravel J."/>
            <person name="Cebula T.A."/>
        </authorList>
    </citation>
    <scope>NUCLEOTIDE SEQUENCE [LARGE SCALE GENOMIC DNA]</scope>
    <source>
        <strain>CVM19633</strain>
    </source>
</reference>
<proteinExistence type="inferred from homology"/>